<evidence type="ECO:0000269" key="1">
    <source>
    </source>
</evidence>
<evidence type="ECO:0000269" key="2">
    <source>
    </source>
</evidence>
<evidence type="ECO:0000269" key="3">
    <source>
    </source>
</evidence>
<evidence type="ECO:0000269" key="4">
    <source>
    </source>
</evidence>
<evidence type="ECO:0000269" key="5">
    <source>
    </source>
</evidence>
<evidence type="ECO:0000269" key="6">
    <source>
    </source>
</evidence>
<evidence type="ECO:0000269" key="7">
    <source>
    </source>
</evidence>
<evidence type="ECO:0000269" key="8">
    <source>
    </source>
</evidence>
<evidence type="ECO:0000269" key="9">
    <source>
    </source>
</evidence>
<evidence type="ECO:0000305" key="10"/>
<evidence type="ECO:0007829" key="11">
    <source>
        <dbReference type="PDB" id="2G7O"/>
    </source>
</evidence>
<evidence type="ECO:0007829" key="12">
    <source>
        <dbReference type="PDB" id="2G9E"/>
    </source>
</evidence>
<evidence type="ECO:0007829" key="13">
    <source>
        <dbReference type="PDB" id="4QPO"/>
    </source>
</evidence>
<proteinExistence type="evidence at protein level"/>
<organism>
    <name type="scientific">Escherichia coli (strain K12)</name>
    <dbReference type="NCBI Taxonomy" id="83333"/>
    <lineage>
        <taxon>Bacteria</taxon>
        <taxon>Pseudomonadati</taxon>
        <taxon>Pseudomonadota</taxon>
        <taxon>Gammaproteobacteria</taxon>
        <taxon>Enterobacterales</taxon>
        <taxon>Enterobacteriaceae</taxon>
        <taxon>Escherichia</taxon>
    </lineage>
</organism>
<sequence>MAKVNLYISNDAYEKINAIIEKRRQEGAREKDVSFSATASMLLELGLRVHEAQMERKESAFNQTEFNKLLLECVVKTQSSVAKILGIESLSPHVSGNSKFEYANMVEDIREKVSSEMERFFPKNDDE</sequence>
<geneLocation type="plasmid">
    <name>F</name>
</geneLocation>
<accession>P10026</accession>
<name>TRAM1_ECOLI</name>
<feature type="chain" id="PRO_0000068467" description="Relaxosome protein TraM">
    <location>
        <begin position="1"/>
        <end position="127"/>
    </location>
</feature>
<feature type="coiled-coil region" evidence="4">
    <location>
        <begin position="63"/>
        <end position="89"/>
    </location>
</feature>
<feature type="mutagenesis site" description="Loss of all functions." evidence="6">
    <original>N</original>
    <variation>D</variation>
    <location>
        <position position="5"/>
    </location>
</feature>
<feature type="mutagenesis site" description="100,000-fold decrease in conjugation efficiency, but tetramerizes and binds DNA normally." evidence="6">
    <original>K</original>
    <variation>E</variation>
    <location>
        <position position="76"/>
    </location>
</feature>
<feature type="mutagenesis site" description="Increased homotetramer stability." evidence="4">
    <original>E</original>
    <variation>L</variation>
    <variation>Q</variation>
    <location>
        <position position="88"/>
    </location>
</feature>
<feature type="mutagenesis site" description="100,000-fold decrease in conjugation efficiency, but tetramerizes and binds DNA normally. Binds less well to TraD. May be dominant over wild-type. Partially rescued by a TraD E-712 mutation." evidence="3 6">
    <original>K</original>
    <variation>E</variation>
    <location>
        <position position="99"/>
    </location>
</feature>
<feature type="mutagenesis site" description="2000-fold decrease in conjugation efficiency, but tetramerizes and binds DNA normally." evidence="6">
    <original>V</original>
    <variation>A</variation>
    <location>
        <position position="106"/>
    </location>
</feature>
<feature type="mutagenesis site" description="33,000-fold decrease in conjugation efficiency, but tetramerize and bind DNA normally." evidence="6">
    <original>R</original>
    <variation>E</variation>
    <location>
        <position position="110"/>
    </location>
</feature>
<feature type="mutagenesis site" description="Alters oligomerization, probably more dimers than tetramers." evidence="3">
    <original>F</original>
    <variation>S</variation>
    <location>
        <position position="121"/>
    </location>
</feature>
<feature type="strand" evidence="13">
    <location>
        <begin position="3"/>
        <end position="7"/>
    </location>
</feature>
<feature type="helix" evidence="13">
    <location>
        <begin position="10"/>
        <end position="24"/>
    </location>
</feature>
<feature type="strand" evidence="13">
    <location>
        <begin position="30"/>
        <end position="33"/>
    </location>
</feature>
<feature type="helix" evidence="13">
    <location>
        <begin position="35"/>
        <end position="53"/>
    </location>
</feature>
<feature type="helix" evidence="11">
    <location>
        <begin position="63"/>
        <end position="89"/>
    </location>
</feature>
<feature type="helix" evidence="11">
    <location>
        <begin position="92"/>
        <end position="94"/>
    </location>
</feature>
<feature type="helix" evidence="11">
    <location>
        <begin position="98"/>
        <end position="100"/>
    </location>
</feature>
<feature type="helix" evidence="11">
    <location>
        <begin position="102"/>
        <end position="120"/>
    </location>
</feature>
<feature type="strand" evidence="12">
    <location>
        <begin position="123"/>
        <end position="125"/>
    </location>
</feature>
<comment type="function">
    <text evidence="1 2 5 8">Conjugative DNA transfer (CDT) is the unidirectional transfer of ssDNA plasmid from a donor to a recipient cell. It is the central mechanism by which antibiotic resistance and virulence factors are propagated in bacterial populations. Part of the relaxosome, which facilitates a site- and strand-specific cut in the origin of transfer by TraI, at the nic site. Cooperatively binds 3 regions in the F plasmid oriT locus; 2 are required for autoregulation while the other is required for plasmid transfer. Bends oriT DNA less than 50 degrees. Plasmid specificity is conferred by the TraD-TraM pair.</text>
</comment>
<comment type="subunit">
    <text evidence="3 4 5 6 7 9 10">Homotetramer. 2 homotetramers cooperatively bind to DNA although they do not contact each other; cooperativity is achieved by DNA kinking and unwinding (Probable). Part of the relaxosome, a complex composed of plasmid encoded TraI, TraM, TraY and host-encoded IHF which binds to the F plasmid origin of transfer (oriT) in a site- and sequence-specific manner. Interacts with TraD. Also interacts with TraY.</text>
</comment>
<comment type="subcellular location">
    <subcellularLocation>
        <location evidence="2">Cytoplasm</location>
    </subcellularLocation>
</comment>
<comment type="induction">
    <text evidence="8">Regulates its own expression from two promoters, requires TraY as well as expression of the tra operon for maximal transcription. TraM is in a monocistonic operon.</text>
</comment>
<comment type="disruption phenotype">
    <text evidence="8">Loss of conjugative DNA transfer.</text>
</comment>
<comment type="similarity">
    <text evidence="10">Belongs to the relaxosome TraM family.</text>
</comment>
<keyword id="KW-0002">3D-structure</keyword>
<keyword id="KW-0175">Coiled coil</keyword>
<keyword id="KW-0184">Conjugation</keyword>
<keyword id="KW-0963">Cytoplasm</keyword>
<keyword id="KW-0238">DNA-binding</keyword>
<keyword id="KW-0614">Plasmid</keyword>
<keyword id="KW-0678">Repressor</keyword>
<keyword id="KW-0804">Transcription</keyword>
<keyword id="KW-0805">Transcription regulation</keyword>
<gene>
    <name type="primary">traM</name>
    <name type="ordered locus">ECOK12F071</name>
</gene>
<reference key="1">
    <citation type="journal article" date="1982" name="Mol. Gen. Genet.">
        <title>Promoter mapping and DNA sequencing of the F plasmid transfer genes traM and traJ.</title>
        <authorList>
            <person name="Thompson R."/>
            <person name="Taylor L."/>
        </authorList>
    </citation>
    <scope>NUCLEOTIDE SEQUENCE [GENOMIC DNA]</scope>
    <source>
        <plasmid>F</plasmid>
    </source>
</reference>
<reference key="2">
    <citation type="journal article" date="1994" name="Microbiol. Rev.">
        <title>Analysis of the sequence and gene products of the transfer region of the F sex factor.</title>
        <authorList>
            <person name="Frost L.S."/>
            <person name="Ippen-Ihler K."/>
            <person name="Skurray R.A."/>
        </authorList>
    </citation>
    <scope>NUCLEOTIDE SEQUENCE [GENOMIC DNA]</scope>
    <source>
        <plasmid>F</plasmid>
    </source>
</reference>
<reference key="3">
    <citation type="submission" date="2000-04" db="EMBL/GenBank/DDBJ databases">
        <title>Complete nucleotide sequence of the F plasmid: its implications for organization and diversification of plasmid genomes.</title>
        <authorList>
            <person name="Shimizu H."/>
            <person name="Saitoh Y."/>
            <person name="Suda Y."/>
            <person name="Uehara K."/>
            <person name="Sampei G."/>
            <person name="Mizobuchi K."/>
        </authorList>
    </citation>
    <scope>NUCLEOTIDE SEQUENCE [LARGE SCALE GENOMIC DNA]</scope>
    <source>
        <strain>K12 / CR63</strain>
        <plasmid>F</plasmid>
    </source>
</reference>
<reference key="4">
    <citation type="journal article" date="1992" name="Mol. Microbiol.">
        <title>The TraM protein of the conjugative plasmid F binds to the origin of transfer of the F and ColE1 plasmids.</title>
        <authorList>
            <person name="Di Laurenzio L."/>
            <person name="Frost L.S."/>
            <person name="Paranchych W."/>
        </authorList>
    </citation>
    <scope>FUNCTION IN DNA-BINDING</scope>
    <scope>SUBCELLULAR LOCATION</scope>
    <source>
        <plasmid>F</plasmid>
    </source>
</reference>
<reference key="5">
    <citation type="journal article" date="1996" name="Mol. Microbiol.">
        <title>Regulation of the expression of the traM gene of the F sex factor of Escherichia coli.</title>
        <authorList>
            <person name="Penfold S.S."/>
            <person name="Simon J."/>
            <person name="Frost L.S."/>
        </authorList>
    </citation>
    <scope>INDUCTION</scope>
    <scope>FUNCTION IN AUTOREGULATION</scope>
    <scope>DISRUPTION PHENOTYPE</scope>
    <source>
        <plasmid>F</plasmid>
    </source>
</reference>
<reference key="6">
    <citation type="journal article" date="1997" name="J. Bacteriol.">
        <title>The cytoplasmic DNA-binding protein TraM binds to the inner membrane protein TraD in vitro.</title>
        <authorList>
            <person name="Disque-Kochem C."/>
            <person name="Dreiseikelmann B."/>
        </authorList>
    </citation>
    <scope>INTERACTION WITH TRAD</scope>
    <source>
        <plasmid>F</plasmid>
    </source>
</reference>
<reference key="7">
    <citation type="journal article" date="2002" name="J. Biol. Chem.">
        <title>Characterizing the DNA contacts and cooperative binding of F plasmid TraM to its cognate sites at oriT.</title>
        <authorList>
            <person name="Fekete R.A."/>
            <person name="Frost L.S."/>
        </authorList>
    </citation>
    <scope>FUNCTION IN COOPERATIVITY OF DNA-BINDING</scope>
    <scope>FUNCTION IN DNA-BENDING</scope>
    <source>
        <plasmid>F</plasmid>
    </source>
</reference>
<reference key="8">
    <citation type="journal article" date="2005" name="J. Bacteriol.">
        <title>Mutations in the C-terminal region of TraM provide evidence for in vivo TraM-TraD interactions during F-plasmid conjugation.</title>
        <authorList>
            <person name="Lu J."/>
            <person name="Frost L.S."/>
        </authorList>
    </citation>
    <scope>INTERACTION WITH TRAD</scope>
    <scope>MUTAGENESIS OF LYS-99 AND PHE-121</scope>
    <source>
        <plasmid>F</plasmid>
    </source>
</reference>
<reference key="9">
    <citation type="journal article" date="2007" name="Mol. Microbiol.">
        <title>The F plasmid-encoded TraM protein stimulates relaxosome-mediated cleavage at oriT through an interaction with TraI.</title>
        <authorList>
            <person name="Ragonese H."/>
            <person name="Haisch D."/>
            <person name="Villareal E."/>
            <person name="Choi J.H."/>
            <person name="Matson S.W."/>
        </authorList>
    </citation>
    <scope>FUNCTION IN STIMULATING TRAI NICKING</scope>
    <scope>DNA-BINDING</scope>
    <scope>INTERACTION WITH TRAY</scope>
    <scope>SUBUNIT</scope>
    <source>
        <plasmid>F</plasmid>
    </source>
</reference>
<reference key="10">
    <citation type="journal article" date="2011" name="Nucleic Acids Res.">
        <title>Structural basis of cooperative DNA recognition by the plasmid conjugation factor, TraM.</title>
        <authorList>
            <person name="Wong J.J."/>
            <person name="Lu J."/>
            <person name="Edwards R.A."/>
            <person name="Frost L.S."/>
            <person name="Glover J.N."/>
        </authorList>
    </citation>
    <scope>SUBUNIT</scope>
    <source>
        <plasmid>F</plasmid>
    </source>
</reference>
<reference key="11">
    <citation type="journal article" date="2006" name="EMBO J.">
        <title>Protonation-mediated structural flexibility in the F conjugation regulatory protein, TraM.</title>
        <authorList>
            <person name="Lu J."/>
            <person name="Edwards R.A."/>
            <person name="Wong J.J."/>
            <person name="Manchak J."/>
            <person name="Scott P.G."/>
            <person name="Frost L.S."/>
            <person name="Glover J.N."/>
        </authorList>
    </citation>
    <scope>X-RAY CRYSTALLOGRAPHY (1.4 ANGSTROMS) OF 58-127</scope>
    <scope>COILED-COIL DOMAIN</scope>
    <scope>SUBUNIT</scope>
    <scope>DNA-BINDING</scope>
    <scope>MUTAGENESIS OF GLU-88</scope>
    <source>
        <plasmid>F</plasmid>
    </source>
</reference>
<reference key="12">
    <citation type="journal article" date="2008" name="Mol. Microbiol.">
        <title>Structural basis of specific TraD-TraM recognition during F plasmid-mediated bacterial conjugation.</title>
        <authorList>
            <person name="Lu J."/>
            <person name="Wong J.J."/>
            <person name="Edwards R.A."/>
            <person name="Manchak J."/>
            <person name="Frost L.S."/>
            <person name="Glover J.N."/>
        </authorList>
    </citation>
    <scope>X-RAY CRYSTALLOGRAPHY (2.55 ANGSTROMS) OF 58-127 IN COMPLEX WITH C-TERMINUS OF TRAD</scope>
    <scope>MUTAGENESIS OF ASN-5; LYS-76; LYS-99; VAL-106 AND ARG-110</scope>
    <source>
        <plasmid>F</plasmid>
    </source>
</reference>
<protein>
    <recommendedName>
        <fullName>Relaxosome protein TraM</fullName>
    </recommendedName>
</protein>
<dbReference type="EMBL" id="K01147">
    <property type="protein sequence ID" value="AAA24907.1"/>
    <property type="molecule type" value="Genomic_DNA"/>
</dbReference>
<dbReference type="EMBL" id="X00545">
    <property type="protein sequence ID" value="CAA25216.1"/>
    <property type="molecule type" value="Genomic_DNA"/>
</dbReference>
<dbReference type="EMBL" id="U01159">
    <property type="protein sequence ID" value="AAC44191.1"/>
    <property type="molecule type" value="Genomic_DNA"/>
</dbReference>
<dbReference type="EMBL" id="AP001918">
    <property type="protein sequence ID" value="BAA97941.1"/>
    <property type="molecule type" value="Genomic_DNA"/>
</dbReference>
<dbReference type="PIR" id="A29331">
    <property type="entry name" value="JCECMF"/>
</dbReference>
<dbReference type="RefSeq" id="NP_061450.1">
    <property type="nucleotide sequence ID" value="NC_002483.1"/>
</dbReference>
<dbReference type="RefSeq" id="WP_001151527.1">
    <property type="nucleotide sequence ID" value="NC_002483.1"/>
</dbReference>
<dbReference type="PDB" id="2G7O">
    <property type="method" value="X-ray"/>
    <property type="resolution" value="1.40 A"/>
    <property type="chains" value="A=58-127"/>
</dbReference>
<dbReference type="PDB" id="2G9E">
    <property type="method" value="X-ray"/>
    <property type="resolution" value="1.80 A"/>
    <property type="chains" value="A=58-127"/>
</dbReference>
<dbReference type="PDB" id="3D8A">
    <property type="method" value="X-ray"/>
    <property type="resolution" value="2.55 A"/>
    <property type="chains" value="A/B/C/D/E/F/G/H=58-127"/>
</dbReference>
<dbReference type="PDB" id="4QPO">
    <property type="method" value="X-ray"/>
    <property type="resolution" value="2.00 A"/>
    <property type="chains" value="A/B/C/D=2-54"/>
</dbReference>
<dbReference type="PDB" id="4QPQ">
    <property type="method" value="X-ray"/>
    <property type="resolution" value="3.11 A"/>
    <property type="chains" value="A/B/C/D/E/F/G/H=2-54"/>
</dbReference>
<dbReference type="PDBsum" id="2G7O"/>
<dbReference type="PDBsum" id="2G9E"/>
<dbReference type="PDBsum" id="3D8A"/>
<dbReference type="PDBsum" id="4QPO"/>
<dbReference type="PDBsum" id="4QPQ"/>
<dbReference type="SMR" id="P10026"/>
<dbReference type="DIP" id="DIP-27653N"/>
<dbReference type="KEGG" id="ecoc:C3026_24460"/>
<dbReference type="PATRIC" id="fig|83333.107.peg.642"/>
<dbReference type="OrthoDB" id="6608258at2"/>
<dbReference type="EvolutionaryTrace" id="P10026"/>
<dbReference type="PRO" id="PR:P10026"/>
<dbReference type="GO" id="GO:0005737">
    <property type="term" value="C:cytoplasm"/>
    <property type="evidence" value="ECO:0007669"/>
    <property type="project" value="UniProtKB-SubCell"/>
</dbReference>
<dbReference type="GO" id="GO:0003677">
    <property type="term" value="F:DNA binding"/>
    <property type="evidence" value="ECO:0007669"/>
    <property type="project" value="UniProtKB-KW"/>
</dbReference>
<dbReference type="CDD" id="cd14804">
    <property type="entry name" value="Tra_M"/>
    <property type="match status" value="1"/>
</dbReference>
<dbReference type="Gene3D" id="1.10.287.2320">
    <property type="match status" value="1"/>
</dbReference>
<dbReference type="Gene3D" id="1.10.10.450">
    <property type="entry name" value="TraM protein, DNA-binding"/>
    <property type="match status" value="1"/>
</dbReference>
<dbReference type="InterPro" id="IPR010992">
    <property type="entry name" value="IHF-like_DNA-bd_dom_sf"/>
</dbReference>
<dbReference type="InterPro" id="IPR042073">
    <property type="entry name" value="TraM_DNA-bd"/>
</dbReference>
<dbReference type="InterPro" id="IPR007925">
    <property type="entry name" value="TRelaxosome_TraM"/>
</dbReference>
<dbReference type="NCBIfam" id="NF010267">
    <property type="entry name" value="PRK13713.1"/>
    <property type="match status" value="1"/>
</dbReference>
<dbReference type="Pfam" id="PF05261">
    <property type="entry name" value="Tra_M"/>
    <property type="match status" value="1"/>
</dbReference>
<dbReference type="SUPFAM" id="SSF47729">
    <property type="entry name" value="IHF-like DNA-binding proteins"/>
    <property type="match status" value="1"/>
</dbReference>
<dbReference type="SUPFAM" id="SSF140581">
    <property type="entry name" value="TraM-like"/>
    <property type="match status" value="1"/>
</dbReference>